<feature type="chain" id="PRO_1000074271" description="tRNA sulfurtransferase">
    <location>
        <begin position="1"/>
        <end position="484"/>
    </location>
</feature>
<feature type="domain" description="THUMP" evidence="1">
    <location>
        <begin position="63"/>
        <end position="167"/>
    </location>
</feature>
<feature type="domain" description="Rhodanese" evidence="1">
    <location>
        <begin position="406"/>
        <end position="484"/>
    </location>
</feature>
<feature type="active site" description="Cysteine persulfide intermediate" evidence="1">
    <location>
        <position position="458"/>
    </location>
</feature>
<feature type="binding site" evidence="1">
    <location>
        <begin position="185"/>
        <end position="186"/>
    </location>
    <ligand>
        <name>ATP</name>
        <dbReference type="ChEBI" id="CHEBI:30616"/>
    </ligand>
</feature>
<feature type="binding site" evidence="1">
    <location>
        <position position="267"/>
    </location>
    <ligand>
        <name>ATP</name>
        <dbReference type="ChEBI" id="CHEBI:30616"/>
    </ligand>
</feature>
<feature type="binding site" evidence="1">
    <location>
        <position position="289"/>
    </location>
    <ligand>
        <name>ATP</name>
        <dbReference type="ChEBI" id="CHEBI:30616"/>
    </ligand>
</feature>
<feature type="binding site" evidence="1">
    <location>
        <position position="298"/>
    </location>
    <ligand>
        <name>ATP</name>
        <dbReference type="ChEBI" id="CHEBI:30616"/>
    </ligand>
</feature>
<feature type="disulfide bond" description="Redox-active" evidence="1">
    <location>
        <begin position="346"/>
        <end position="458"/>
    </location>
</feature>
<proteinExistence type="inferred from homology"/>
<comment type="function">
    <text evidence="1">Catalyzes the ATP-dependent transfer of a sulfur to tRNA to produce 4-thiouridine in position 8 of tRNAs, which functions as a near-UV photosensor. Also catalyzes the transfer of sulfur to the sulfur carrier protein ThiS, forming ThiS-thiocarboxylate. This is a step in the synthesis of thiazole, in the thiamine biosynthesis pathway. The sulfur is donated as persulfide by IscS.</text>
</comment>
<comment type="catalytic activity">
    <reaction evidence="1">
        <text>[ThiI sulfur-carrier protein]-S-sulfanyl-L-cysteine + a uridine in tRNA + 2 reduced [2Fe-2S]-[ferredoxin] + ATP + H(+) = [ThiI sulfur-carrier protein]-L-cysteine + a 4-thiouridine in tRNA + 2 oxidized [2Fe-2S]-[ferredoxin] + AMP + diphosphate</text>
        <dbReference type="Rhea" id="RHEA:24176"/>
        <dbReference type="Rhea" id="RHEA-COMP:10000"/>
        <dbReference type="Rhea" id="RHEA-COMP:10001"/>
        <dbReference type="Rhea" id="RHEA-COMP:13337"/>
        <dbReference type="Rhea" id="RHEA-COMP:13338"/>
        <dbReference type="Rhea" id="RHEA-COMP:13339"/>
        <dbReference type="Rhea" id="RHEA-COMP:13340"/>
        <dbReference type="ChEBI" id="CHEBI:15378"/>
        <dbReference type="ChEBI" id="CHEBI:29950"/>
        <dbReference type="ChEBI" id="CHEBI:30616"/>
        <dbReference type="ChEBI" id="CHEBI:33019"/>
        <dbReference type="ChEBI" id="CHEBI:33737"/>
        <dbReference type="ChEBI" id="CHEBI:33738"/>
        <dbReference type="ChEBI" id="CHEBI:61963"/>
        <dbReference type="ChEBI" id="CHEBI:65315"/>
        <dbReference type="ChEBI" id="CHEBI:136798"/>
        <dbReference type="ChEBI" id="CHEBI:456215"/>
        <dbReference type="EC" id="2.8.1.4"/>
    </reaction>
</comment>
<comment type="catalytic activity">
    <reaction evidence="1">
        <text>[ThiS sulfur-carrier protein]-C-terminal Gly-Gly-AMP + S-sulfanyl-L-cysteinyl-[cysteine desulfurase] + AH2 = [ThiS sulfur-carrier protein]-C-terminal-Gly-aminoethanethioate + L-cysteinyl-[cysteine desulfurase] + A + AMP + 2 H(+)</text>
        <dbReference type="Rhea" id="RHEA:43340"/>
        <dbReference type="Rhea" id="RHEA-COMP:12157"/>
        <dbReference type="Rhea" id="RHEA-COMP:12158"/>
        <dbReference type="Rhea" id="RHEA-COMP:12910"/>
        <dbReference type="Rhea" id="RHEA-COMP:19908"/>
        <dbReference type="ChEBI" id="CHEBI:13193"/>
        <dbReference type="ChEBI" id="CHEBI:15378"/>
        <dbReference type="ChEBI" id="CHEBI:17499"/>
        <dbReference type="ChEBI" id="CHEBI:29950"/>
        <dbReference type="ChEBI" id="CHEBI:61963"/>
        <dbReference type="ChEBI" id="CHEBI:90618"/>
        <dbReference type="ChEBI" id="CHEBI:232372"/>
        <dbReference type="ChEBI" id="CHEBI:456215"/>
    </reaction>
</comment>
<comment type="pathway">
    <text evidence="1">Cofactor biosynthesis; thiamine diphosphate biosynthesis.</text>
</comment>
<comment type="subcellular location">
    <subcellularLocation>
        <location evidence="1">Cytoplasm</location>
    </subcellularLocation>
</comment>
<comment type="similarity">
    <text evidence="1">Belongs to the ThiI family.</text>
</comment>
<evidence type="ECO:0000255" key="1">
    <source>
        <dbReference type="HAMAP-Rule" id="MF_00021"/>
    </source>
</evidence>
<keyword id="KW-0067">ATP-binding</keyword>
<keyword id="KW-0963">Cytoplasm</keyword>
<keyword id="KW-1015">Disulfide bond</keyword>
<keyword id="KW-0547">Nucleotide-binding</keyword>
<keyword id="KW-0676">Redox-active center</keyword>
<keyword id="KW-0694">RNA-binding</keyword>
<keyword id="KW-0784">Thiamine biosynthesis</keyword>
<keyword id="KW-0808">Transferase</keyword>
<keyword id="KW-0820">tRNA-binding</keyword>
<protein>
    <recommendedName>
        <fullName evidence="1">tRNA sulfurtransferase</fullName>
        <ecNumber evidence="1">2.8.1.4</ecNumber>
    </recommendedName>
    <alternativeName>
        <fullName evidence="1">Sulfur carrier protein ThiS sulfurtransferase</fullName>
    </alternativeName>
    <alternativeName>
        <fullName evidence="1">Thiamine biosynthesis protein ThiI</fullName>
    </alternativeName>
    <alternativeName>
        <fullName evidence="1">tRNA 4-thiouridine synthase</fullName>
    </alternativeName>
</protein>
<dbReference type="EC" id="2.8.1.4" evidence="1"/>
<dbReference type="EMBL" id="CP000681">
    <property type="protein sequence ID" value="ABP75008.1"/>
    <property type="molecule type" value="Genomic_DNA"/>
</dbReference>
<dbReference type="SMR" id="A4Y4X5"/>
<dbReference type="STRING" id="319224.Sputcn32_1280"/>
<dbReference type="KEGG" id="spc:Sputcn32_1280"/>
<dbReference type="eggNOG" id="COG0301">
    <property type="taxonomic scope" value="Bacteria"/>
</dbReference>
<dbReference type="eggNOG" id="COG0607">
    <property type="taxonomic scope" value="Bacteria"/>
</dbReference>
<dbReference type="HOGENOM" id="CLU_037952_4_1_6"/>
<dbReference type="UniPathway" id="UPA00060"/>
<dbReference type="GO" id="GO:0005829">
    <property type="term" value="C:cytosol"/>
    <property type="evidence" value="ECO:0007669"/>
    <property type="project" value="TreeGrafter"/>
</dbReference>
<dbReference type="GO" id="GO:0005524">
    <property type="term" value="F:ATP binding"/>
    <property type="evidence" value="ECO:0007669"/>
    <property type="project" value="UniProtKB-UniRule"/>
</dbReference>
<dbReference type="GO" id="GO:0004810">
    <property type="term" value="F:CCA tRNA nucleotidyltransferase activity"/>
    <property type="evidence" value="ECO:0007669"/>
    <property type="project" value="InterPro"/>
</dbReference>
<dbReference type="GO" id="GO:0000049">
    <property type="term" value="F:tRNA binding"/>
    <property type="evidence" value="ECO:0007669"/>
    <property type="project" value="UniProtKB-UniRule"/>
</dbReference>
<dbReference type="GO" id="GO:0140741">
    <property type="term" value="F:tRNA-uracil-4 sulfurtransferase activity"/>
    <property type="evidence" value="ECO:0007669"/>
    <property type="project" value="UniProtKB-EC"/>
</dbReference>
<dbReference type="GO" id="GO:0009228">
    <property type="term" value="P:thiamine biosynthetic process"/>
    <property type="evidence" value="ECO:0007669"/>
    <property type="project" value="UniProtKB-KW"/>
</dbReference>
<dbReference type="GO" id="GO:0009229">
    <property type="term" value="P:thiamine diphosphate biosynthetic process"/>
    <property type="evidence" value="ECO:0007669"/>
    <property type="project" value="UniProtKB-UniRule"/>
</dbReference>
<dbReference type="GO" id="GO:0052837">
    <property type="term" value="P:thiazole biosynthetic process"/>
    <property type="evidence" value="ECO:0007669"/>
    <property type="project" value="InterPro"/>
</dbReference>
<dbReference type="GO" id="GO:0002937">
    <property type="term" value="P:tRNA 4-thiouridine biosynthesis"/>
    <property type="evidence" value="ECO:0007669"/>
    <property type="project" value="TreeGrafter"/>
</dbReference>
<dbReference type="CDD" id="cd01712">
    <property type="entry name" value="PPase_ThiI"/>
    <property type="match status" value="1"/>
</dbReference>
<dbReference type="CDD" id="cd00158">
    <property type="entry name" value="RHOD"/>
    <property type="match status" value="1"/>
</dbReference>
<dbReference type="CDD" id="cd11716">
    <property type="entry name" value="THUMP_ThiI"/>
    <property type="match status" value="1"/>
</dbReference>
<dbReference type="FunFam" id="3.30.2130.30:FF:000002">
    <property type="entry name" value="tRNA sulfurtransferase"/>
    <property type="match status" value="1"/>
</dbReference>
<dbReference type="FunFam" id="3.40.250.10:FF:000003">
    <property type="entry name" value="tRNA sulfurtransferase"/>
    <property type="match status" value="1"/>
</dbReference>
<dbReference type="FunFam" id="3.40.50.620:FF:000029">
    <property type="entry name" value="tRNA sulfurtransferase"/>
    <property type="match status" value="1"/>
</dbReference>
<dbReference type="Gene3D" id="3.30.2130.30">
    <property type="match status" value="1"/>
</dbReference>
<dbReference type="Gene3D" id="3.40.50.620">
    <property type="entry name" value="HUPs"/>
    <property type="match status" value="1"/>
</dbReference>
<dbReference type="Gene3D" id="3.40.250.10">
    <property type="entry name" value="Rhodanese-like domain"/>
    <property type="match status" value="1"/>
</dbReference>
<dbReference type="HAMAP" id="MF_00021">
    <property type="entry name" value="ThiI"/>
    <property type="match status" value="1"/>
</dbReference>
<dbReference type="InterPro" id="IPR001763">
    <property type="entry name" value="Rhodanese-like_dom"/>
</dbReference>
<dbReference type="InterPro" id="IPR036873">
    <property type="entry name" value="Rhodanese-like_dom_sf"/>
</dbReference>
<dbReference type="InterPro" id="IPR014729">
    <property type="entry name" value="Rossmann-like_a/b/a_fold"/>
</dbReference>
<dbReference type="InterPro" id="IPR020536">
    <property type="entry name" value="ThiI_AANH"/>
</dbReference>
<dbReference type="InterPro" id="IPR054173">
    <property type="entry name" value="ThiI_fer"/>
</dbReference>
<dbReference type="InterPro" id="IPR049961">
    <property type="entry name" value="ThiI_N"/>
</dbReference>
<dbReference type="InterPro" id="IPR026340">
    <property type="entry name" value="THII_Thiazole_biosynth_dom"/>
</dbReference>
<dbReference type="InterPro" id="IPR004114">
    <property type="entry name" value="THUMP_dom"/>
</dbReference>
<dbReference type="InterPro" id="IPR049962">
    <property type="entry name" value="THUMP_ThiI"/>
</dbReference>
<dbReference type="InterPro" id="IPR003720">
    <property type="entry name" value="tRNA_STrfase"/>
</dbReference>
<dbReference type="InterPro" id="IPR050102">
    <property type="entry name" value="tRNA_sulfurtransferase_ThiI"/>
</dbReference>
<dbReference type="NCBIfam" id="TIGR04271">
    <property type="entry name" value="ThiI_C_thiazole"/>
    <property type="match status" value="1"/>
</dbReference>
<dbReference type="NCBIfam" id="TIGR00342">
    <property type="entry name" value="tRNA uracil 4-sulfurtransferase ThiI"/>
    <property type="match status" value="1"/>
</dbReference>
<dbReference type="PANTHER" id="PTHR43209">
    <property type="entry name" value="TRNA SULFURTRANSFERASE"/>
    <property type="match status" value="1"/>
</dbReference>
<dbReference type="PANTHER" id="PTHR43209:SF1">
    <property type="entry name" value="TRNA SULFURTRANSFERASE"/>
    <property type="match status" value="1"/>
</dbReference>
<dbReference type="Pfam" id="PF00581">
    <property type="entry name" value="Rhodanese"/>
    <property type="match status" value="1"/>
</dbReference>
<dbReference type="Pfam" id="PF02568">
    <property type="entry name" value="ThiI"/>
    <property type="match status" value="1"/>
</dbReference>
<dbReference type="Pfam" id="PF22025">
    <property type="entry name" value="ThiI_fer"/>
    <property type="match status" value="1"/>
</dbReference>
<dbReference type="Pfam" id="PF02926">
    <property type="entry name" value="THUMP"/>
    <property type="match status" value="1"/>
</dbReference>
<dbReference type="SMART" id="SM00981">
    <property type="entry name" value="THUMP"/>
    <property type="match status" value="1"/>
</dbReference>
<dbReference type="SUPFAM" id="SSF52402">
    <property type="entry name" value="Adenine nucleotide alpha hydrolases-like"/>
    <property type="match status" value="1"/>
</dbReference>
<dbReference type="SUPFAM" id="SSF52821">
    <property type="entry name" value="Rhodanese/Cell cycle control phosphatase"/>
    <property type="match status" value="1"/>
</dbReference>
<dbReference type="SUPFAM" id="SSF143437">
    <property type="entry name" value="THUMP domain-like"/>
    <property type="match status" value="1"/>
</dbReference>
<dbReference type="PROSITE" id="PS50206">
    <property type="entry name" value="RHODANESE_3"/>
    <property type="match status" value="1"/>
</dbReference>
<dbReference type="PROSITE" id="PS51165">
    <property type="entry name" value="THUMP"/>
    <property type="match status" value="1"/>
</dbReference>
<reference key="1">
    <citation type="submission" date="2007-04" db="EMBL/GenBank/DDBJ databases">
        <title>Complete sequence of Shewanella putrefaciens CN-32.</title>
        <authorList>
            <consortium name="US DOE Joint Genome Institute"/>
            <person name="Copeland A."/>
            <person name="Lucas S."/>
            <person name="Lapidus A."/>
            <person name="Barry K."/>
            <person name="Detter J.C."/>
            <person name="Glavina del Rio T."/>
            <person name="Hammon N."/>
            <person name="Israni S."/>
            <person name="Dalin E."/>
            <person name="Tice H."/>
            <person name="Pitluck S."/>
            <person name="Chain P."/>
            <person name="Malfatti S."/>
            <person name="Shin M."/>
            <person name="Vergez L."/>
            <person name="Schmutz J."/>
            <person name="Larimer F."/>
            <person name="Land M."/>
            <person name="Hauser L."/>
            <person name="Kyrpides N."/>
            <person name="Mikhailova N."/>
            <person name="Romine M.F."/>
            <person name="Fredrickson J."/>
            <person name="Tiedje J."/>
            <person name="Richardson P."/>
        </authorList>
    </citation>
    <scope>NUCLEOTIDE SEQUENCE [LARGE SCALE GENOMIC DNA]</scope>
    <source>
        <strain>CN-32 / ATCC BAA-453</strain>
    </source>
</reference>
<sequence length="484" mass="55014">MKFIVKLYPEIMMKSKPVRMRFTKMLETNIRNVLKKVDEDAKVQRQWDRIMVMVPKHKPELAQAFGERLACIPGIAHVVQVDEYSFESVDDIYQQALPVYRDQIAGKTFCVRVKRTGDHDFNSIDVERYVGGGLNQFTDAIGVRLKNPDVTVNLEIDRDKLYMVTKRIEGLGGFPMATQEDVLSLISGGFDSGVSSYQFIKKGARTHYCFFNLGGAQHEIGVKQVAYHLWKTYGESHKVKFVSVPFEPVVAEILEKIDNGQMGVVLKRMMMRTAARIAERLGIQALVTGESLGQVSSQTLTNLNVIDRCTELLILRPLIAMDKQDIINESRRIGTEDFAKSMPEYCGVISQKPTVKAVLAKVEAEEKKFSEDLIDQIVAQAVTIDIREIAEQMDTRITETETVIAIETNEVVIDIRAPEEEEHKPLNIEGVEVKRIPFFKLATQFADLDKQKTYLLYCERGVMSKLQALYLIEQGYTNVKVYRP</sequence>
<accession>A4Y4X5</accession>
<organism>
    <name type="scientific">Shewanella putrefaciens (strain CN-32 / ATCC BAA-453)</name>
    <dbReference type="NCBI Taxonomy" id="319224"/>
    <lineage>
        <taxon>Bacteria</taxon>
        <taxon>Pseudomonadati</taxon>
        <taxon>Pseudomonadota</taxon>
        <taxon>Gammaproteobacteria</taxon>
        <taxon>Alteromonadales</taxon>
        <taxon>Shewanellaceae</taxon>
        <taxon>Shewanella</taxon>
    </lineage>
</organism>
<name>THII_SHEPC</name>
<gene>
    <name evidence="1" type="primary">thiI</name>
    <name type="ordered locus">Sputcn32_1280</name>
</gene>